<organismHost>
    <name type="scientific">Petunia</name>
    <dbReference type="NCBI Taxonomy" id="4101"/>
</organismHost>
<keyword id="KW-0064">Aspartyl protease</keyword>
<keyword id="KW-0175">Coiled coil</keyword>
<keyword id="KW-0238">DNA-binding</keyword>
<keyword id="KW-0255">Endonuclease</keyword>
<keyword id="KW-0378">Hydrolase</keyword>
<keyword id="KW-0460">Magnesium</keyword>
<keyword id="KW-0479">Metal-binding</keyword>
<keyword id="KW-0540">Nuclease</keyword>
<keyword id="KW-0548">Nucleotidyltransferase</keyword>
<keyword id="KW-0645">Protease</keyword>
<keyword id="KW-0695">RNA-directed DNA polymerase</keyword>
<keyword id="KW-0808">Transferase</keyword>
<keyword id="KW-0813">Transport</keyword>
<keyword id="KW-0916">Viral movement protein</keyword>
<keyword id="KW-0862">Zinc</keyword>
<keyword id="KW-0863">Zinc-finger</keyword>
<dbReference type="EC" id="3.4.23.-"/>
<dbReference type="EC" id="2.7.7.49" evidence="4"/>
<dbReference type="EC" id="2.7.7.7" evidence="4"/>
<dbReference type="EMBL" id="AY228106">
    <property type="protein sequence ID" value="AAO67368.1"/>
    <property type="molecule type" value="Genomic_DNA"/>
</dbReference>
<dbReference type="EMBL" id="AY228106">
    <property type="protein sequence ID" value="AAO67369.1"/>
    <property type="status" value="ALT_SEQ"/>
    <property type="molecule type" value="Genomic_DNA"/>
</dbReference>
<dbReference type="SMR" id="Q6XKE6"/>
<dbReference type="Proteomes" id="UP000008483">
    <property type="component" value="Genome"/>
</dbReference>
<dbReference type="GO" id="GO:0004190">
    <property type="term" value="F:aspartic-type endopeptidase activity"/>
    <property type="evidence" value="ECO:0007669"/>
    <property type="project" value="UniProtKB-KW"/>
</dbReference>
<dbReference type="GO" id="GO:0003677">
    <property type="term" value="F:DNA binding"/>
    <property type="evidence" value="ECO:0007669"/>
    <property type="project" value="UniProtKB-KW"/>
</dbReference>
<dbReference type="GO" id="GO:0003887">
    <property type="term" value="F:DNA-directed DNA polymerase activity"/>
    <property type="evidence" value="ECO:0007669"/>
    <property type="project" value="UniProtKB-EC"/>
</dbReference>
<dbReference type="GO" id="GO:0004519">
    <property type="term" value="F:endonuclease activity"/>
    <property type="evidence" value="ECO:0007669"/>
    <property type="project" value="UniProtKB-KW"/>
</dbReference>
<dbReference type="GO" id="GO:0003964">
    <property type="term" value="F:RNA-directed DNA polymerase activity"/>
    <property type="evidence" value="ECO:0007669"/>
    <property type="project" value="UniProtKB-KW"/>
</dbReference>
<dbReference type="GO" id="GO:0008270">
    <property type="term" value="F:zinc ion binding"/>
    <property type="evidence" value="ECO:0007669"/>
    <property type="project" value="UniProtKB-KW"/>
</dbReference>
<dbReference type="GO" id="GO:0006508">
    <property type="term" value="P:proteolysis"/>
    <property type="evidence" value="ECO:0007669"/>
    <property type="project" value="UniProtKB-KW"/>
</dbReference>
<dbReference type="GO" id="GO:0046740">
    <property type="term" value="P:transport of virus in host, cell to cell"/>
    <property type="evidence" value="ECO:0007669"/>
    <property type="project" value="UniProtKB-KW"/>
</dbReference>
<dbReference type="CDD" id="cd09274">
    <property type="entry name" value="RNase_HI_RT_Ty3"/>
    <property type="match status" value="1"/>
</dbReference>
<dbReference type="CDD" id="cd01647">
    <property type="entry name" value="RT_LTR"/>
    <property type="match status" value="1"/>
</dbReference>
<dbReference type="Gene3D" id="3.30.70.270">
    <property type="match status" value="2"/>
</dbReference>
<dbReference type="Gene3D" id="3.10.10.10">
    <property type="entry name" value="HIV Type 1 Reverse Transcriptase, subunit A, domain 1"/>
    <property type="match status" value="1"/>
</dbReference>
<dbReference type="Gene3D" id="4.10.60.10">
    <property type="entry name" value="Zinc finger, CCHC-type"/>
    <property type="match status" value="1"/>
</dbReference>
<dbReference type="InterPro" id="IPR043502">
    <property type="entry name" value="DNA/RNA_pol_sf"/>
</dbReference>
<dbReference type="InterPro" id="IPR053098">
    <property type="entry name" value="Petuviruses_polyprotein"/>
</dbReference>
<dbReference type="InterPro" id="IPR043128">
    <property type="entry name" value="Rev_trsase/Diguanyl_cyclase"/>
</dbReference>
<dbReference type="InterPro" id="IPR000477">
    <property type="entry name" value="RT_dom"/>
</dbReference>
<dbReference type="InterPro" id="IPR041577">
    <property type="entry name" value="RT_RNaseH_2"/>
</dbReference>
<dbReference type="InterPro" id="IPR028919">
    <property type="entry name" value="Viral_movement"/>
</dbReference>
<dbReference type="InterPro" id="IPR001878">
    <property type="entry name" value="Znf_CCHC"/>
</dbReference>
<dbReference type="InterPro" id="IPR036875">
    <property type="entry name" value="Znf_CCHC_sf"/>
</dbReference>
<dbReference type="PANTHER" id="PTHR48435">
    <property type="entry name" value="POLYPROTEIN"/>
    <property type="match status" value="1"/>
</dbReference>
<dbReference type="PANTHER" id="PTHR48435:SF1">
    <property type="entry name" value="POLYPROTEIN"/>
    <property type="match status" value="1"/>
</dbReference>
<dbReference type="Pfam" id="PF01107">
    <property type="entry name" value="MP"/>
    <property type="match status" value="1"/>
</dbReference>
<dbReference type="Pfam" id="PF17919">
    <property type="entry name" value="RT_RNaseH_2"/>
    <property type="match status" value="1"/>
</dbReference>
<dbReference type="Pfam" id="PF00078">
    <property type="entry name" value="RVT_1"/>
    <property type="match status" value="1"/>
</dbReference>
<dbReference type="Pfam" id="PF00098">
    <property type="entry name" value="zf-CCHC"/>
    <property type="match status" value="1"/>
</dbReference>
<dbReference type="SMART" id="SM00343">
    <property type="entry name" value="ZnF_C2HC"/>
    <property type="match status" value="1"/>
</dbReference>
<dbReference type="SUPFAM" id="SSF56672">
    <property type="entry name" value="DNA/RNA polymerases"/>
    <property type="match status" value="1"/>
</dbReference>
<dbReference type="SUPFAM" id="SSF57756">
    <property type="entry name" value="Retrovirus zinc finger-like domains"/>
    <property type="match status" value="1"/>
</dbReference>
<dbReference type="PROSITE" id="PS50878">
    <property type="entry name" value="RT_POL"/>
    <property type="match status" value="1"/>
</dbReference>
<dbReference type="PROSITE" id="PS50158">
    <property type="entry name" value="ZF_CCHC"/>
    <property type="match status" value="1"/>
</dbReference>
<accession>Q6XKE6</accession>
<accession>Q6XKE5</accession>
<reference key="1">
    <citation type="journal article" date="2003" name="EMBO J.">
        <title>Induction of infectious petunia vein clearing (pararetro) virus from endogenous provirus in petunia.</title>
        <authorList>
            <person name="Richert-Poggeler K.R."/>
            <person name="Noreen F."/>
            <person name="Schwarzacher T."/>
            <person name="Harper G."/>
            <person name="Hohn T."/>
        </authorList>
    </citation>
    <scope>NUCLEOTIDE SEQUENCE [GENOMIC RNA]</scope>
</reference>
<protein>
    <recommendedName>
        <fullName>Genome polyprotein</fullName>
    </recommendedName>
    <domain>
        <recommendedName>
            <fullName>Aspartic protease</fullName>
            <shortName>PR</shortName>
            <ecNumber>3.4.23.-</ecNumber>
        </recommendedName>
    </domain>
    <domain>
        <recommendedName>
            <fullName>Reverse transcriptase</fullName>
            <shortName>RT</shortName>
            <ecNumber evidence="4">2.7.7.49</ecNumber>
            <ecNumber evidence="4">2.7.7.7</ecNumber>
        </recommendedName>
    </domain>
</protein>
<sequence length="2180" mass="252579">MMTSPSDYQSNSSLATTYSNAPKLSKALSNKYDYLYEVDILKENQKISDTYLPLLNPYSAFAKRSVTPWSQIRSLVQSKPRHVKEYVAASKLDQHPVFATGEEQFVTLHIPEEFASHWKSHQFTHIHFGAVKIALTYHGRKGQPVVARLALLDTRYLEYQHANLGTAEITLNAGTVFITLFPNFTMSLSDANLSTALKIQVQIQGAPLTKDSIQATLHYQIAWRVQNHAMDLTLPGGEEALFLKIDAGNGATQCTQVPRQLSKEDLIKILPDSWVTNYEKLKEPEEPLRSTEVSMSKRHDKSVAISFDHSHYKKLRNTHHFMGMISDDVIVLDDPETFSKTLPSLMQTHDWIHHFQLDGRAVSWYKDPFDGHCPWDIDCQCYSCLYSEDEEDFEDGFPTKYKGIPRPGSIAERKMQEEANLKKLYEDKDPFVGSLSRPGKYEYLVRYDAPSWAKDPHLTVEPTGWDSDEPILPNQPFITRNTLPKIYMFNPLNYENNFPPLSSFSKDGADHTPKIPKRNVVLPSGAKDPTGDLEATVNWQTENALAQNRMLTTIDRTLKETVTKVDRVSDQSSKNQGLIRVLEQQLQDLNKRICPPGTSLFHFFDQQKSEMASLKEQIRLLKEQPQKNETDTPSYQSSYQPFHNFSSPYMPSNPPNSPFTNFANTPQPQPSLFSQYPIQPKSPNTFDLAKLVWEKKDAIAEEKRAKKKLQKDEVKQKTSLPPESKRPDPQSSSHLGDQFMISDPTLPKVYELNEPSVPSEDTSSQSYISTEESVEDTDSFSVVSEESTQLSQLSSSSNDSPENNENTLPQTFMVRPTEPEISEVEDEVDGMTEEPIPERRPEITPPKMVGTGFHTFSLDDISITKWPERIQDFHTWMLTKQLVEREPFLILSEFTARLSGTLREWWNSVGPDDKNRFLTSQDFTWNIRILYSYFCGDQSQNKEELRRQIFEMKCLSYDRKKIDRHFQRMIKLFYHIGGDISLKQAFISSLPPILSERISALIKERGTSGTQMHVGDIRQTGFYVLDDLCSKRKFFNQMKKMSRDLEKACTKSDLIIKGDKGCSGYCNPSRRRKYKRFKLPSFKERDGRQYRKRRRFFRKSKTSKAMRQKPRSCFTCGKIGHFSRNCPQNKKSIKLISEIQKYTGIDIEDDLESVFSIEDEPSEDTLFSLEFYEEYAGEQYQITSYEAPKTENPPLPKIHTIVEIPQTEVKVYTSKWDKPISVIAFYDTGAAYSIMDPAILPSEYWIPHFRHFGTADDGILTTTVKTKHPITIEFFPGFKYTTKLLGSDIPGKDLLIGFDIYRQLNNKLRIGADGIRWKNQFKRYTEIPRLFQLTTSNELQQLEDVIKNQLCAESHVDFLSKCSHPLWLNQDFFIQLPFKRNENINPTKASHSGMNPEHLQLALKECDELQQFDLIEPSDSQWACEAFYVNKRSEQVRGKLRLVINYQPLNHFLQDDKFPIPNKLTLFSHLSKAKLFSKFDLKSGFWQLGIHPNERPKTGFCIPDRHFQWKVMPFGLKTAPSLFQKAMIKIFQPILFSALVYIDDILLFSETLEDHIKLLNQFISLVKKFGVMLSAKKMILAQNKIQFLGMDFADGTFSPAGHISLELQKFPDTNLSVKQIQQFLGIVNYIRDFIPEVTEHISPLSDMLKKKPPAWGKCQDNAVKQLKQLAQQVKSLHIPSEGKKILQTDASDQYWSAVLLEEHNGKRKICGFASGKFKVSEQHYHSTFKEILAVKNGIKKFNFFLIHTNFLVEMDMRAFPKMIRLNPKIVPNSQLLRWAQWFSPYQFEVKHLKGKDNILADFLSRPHEFSQRLKNSPKVLMFQRRTRSNSTKSKADSSQSTGSSYKLSHNLPENPPEAFDLDYPWDTSVFLERRTFYELQVFKKYGGSILRPFGVDPEYPFAHIFIPNPTDFSEDLLWMFWYLLNHFHILMEFRCSKFSKFDQVNPWMMKFLLWFNNHNYWASLFKCMKGIKKYVVIWFYRPVNYYQGKLCALPHSSIVKWNHVSVLNDEDEYSELQRFIFQENKCIPKEIWPGSLGSWNYGNSDHPHGQWIRDALREYREMNDYFQDAQDPYPAYSKVDLTQEELNTLRITRSYGSSSEDADMVKRSIYTVQSNIVKNSPRKRKGKAKSKSSTRNEKRRAKNKCKYRSLHGEDWWIELGYSTKPSTPSWTQDSSSEPCI</sequence>
<feature type="chain" id="PRO_0000318063" description="Genome polyprotein">
    <location>
        <begin position="1"/>
        <end position="2180"/>
    </location>
</feature>
<feature type="zinc finger region" description="CCHC-type" evidence="3">
    <location>
        <begin position="1113"/>
        <end position="1126"/>
    </location>
</feature>
<feature type="region of interest" description="Disordered" evidence="5">
    <location>
        <begin position="507"/>
        <end position="529"/>
    </location>
</feature>
<feature type="region of interest" description="Disordered" evidence="5">
    <location>
        <begin position="624"/>
        <end position="679"/>
    </location>
</feature>
<feature type="region of interest" description="Disordered" evidence="5">
    <location>
        <begin position="703"/>
        <end position="809"/>
    </location>
</feature>
<feature type="region of interest" description="Disordered" evidence="5">
    <location>
        <begin position="822"/>
        <end position="848"/>
    </location>
</feature>
<feature type="region of interest" description="Disordered" evidence="5">
    <location>
        <begin position="1824"/>
        <end position="1848"/>
    </location>
</feature>
<feature type="region of interest" description="Disordered" evidence="5">
    <location>
        <begin position="2115"/>
        <end position="2145"/>
    </location>
</feature>
<feature type="region of interest" description="Disordered" evidence="5">
    <location>
        <begin position="2161"/>
        <end position="2180"/>
    </location>
</feature>
<feature type="coiled-coil region" evidence="2">
    <location>
        <begin position="573"/>
        <end position="624"/>
    </location>
</feature>
<feature type="compositionally biased region" description="Polar residues" evidence="5">
    <location>
        <begin position="631"/>
        <end position="643"/>
    </location>
</feature>
<feature type="compositionally biased region" description="Polar residues" evidence="5">
    <location>
        <begin position="670"/>
        <end position="679"/>
    </location>
</feature>
<feature type="compositionally biased region" description="Basic and acidic residues" evidence="5">
    <location>
        <begin position="703"/>
        <end position="716"/>
    </location>
</feature>
<feature type="compositionally biased region" description="Polar residues" evidence="5">
    <location>
        <begin position="759"/>
        <end position="771"/>
    </location>
</feature>
<feature type="compositionally biased region" description="Low complexity" evidence="5">
    <location>
        <begin position="784"/>
        <end position="807"/>
    </location>
</feature>
<feature type="compositionally biased region" description="Acidic residues" evidence="5">
    <location>
        <begin position="822"/>
        <end position="832"/>
    </location>
</feature>
<feature type="compositionally biased region" description="Polar residues" evidence="5">
    <location>
        <begin position="1828"/>
        <end position="1847"/>
    </location>
</feature>
<feature type="compositionally biased region" description="Basic residues" evidence="5">
    <location>
        <begin position="2120"/>
        <end position="2145"/>
    </location>
</feature>
<feature type="compositionally biased region" description="Polar residues" evidence="5">
    <location>
        <begin position="2163"/>
        <end position="2180"/>
    </location>
</feature>
<feature type="active site" description="For protease activity; shared with dimeric partner" evidence="1">
    <location>
        <position position="1227"/>
    </location>
</feature>
<feature type="binding site" evidence="4">
    <location>
        <position position="1480"/>
    </location>
    <ligand>
        <name>Mg(2+)</name>
        <dbReference type="ChEBI" id="CHEBI:18420"/>
        <note>catalytic</note>
    </ligand>
</feature>
<feature type="binding site" evidence="4">
    <location>
        <position position="1543"/>
    </location>
    <ligand>
        <name>Mg(2+)</name>
        <dbReference type="ChEBI" id="CHEBI:18420"/>
        <note>catalytic</note>
    </ligand>
</feature>
<feature type="binding site" evidence="4">
    <location>
        <position position="1544"/>
    </location>
    <ligand>
        <name>Mg(2+)</name>
        <dbReference type="ChEBI" id="CHEBI:18420"/>
        <note>catalytic</note>
    </ligand>
</feature>
<comment type="function">
    <text evidence="6">Encodes presumably for at least four polypeptides: Movement protein (MP), capsid protein (CP), Protease (PR), and reverse transcriptase (RT).</text>
</comment>
<comment type="catalytic activity">
    <reaction evidence="4">
        <text>DNA(n) + a 2'-deoxyribonucleoside 5'-triphosphate = DNA(n+1) + diphosphate</text>
        <dbReference type="Rhea" id="RHEA:22508"/>
        <dbReference type="Rhea" id="RHEA-COMP:17339"/>
        <dbReference type="Rhea" id="RHEA-COMP:17340"/>
        <dbReference type="ChEBI" id="CHEBI:33019"/>
        <dbReference type="ChEBI" id="CHEBI:61560"/>
        <dbReference type="ChEBI" id="CHEBI:173112"/>
        <dbReference type="EC" id="2.7.7.49"/>
    </reaction>
</comment>
<comment type="catalytic activity">
    <reaction evidence="4">
        <text>DNA(n) + a 2'-deoxyribonucleoside 5'-triphosphate = DNA(n+1) + diphosphate</text>
        <dbReference type="Rhea" id="RHEA:22508"/>
        <dbReference type="Rhea" id="RHEA-COMP:17339"/>
        <dbReference type="Rhea" id="RHEA-COMP:17340"/>
        <dbReference type="ChEBI" id="CHEBI:33019"/>
        <dbReference type="ChEBI" id="CHEBI:61560"/>
        <dbReference type="ChEBI" id="CHEBI:173112"/>
        <dbReference type="EC" id="2.7.7.7"/>
    </reaction>
</comment>
<comment type="similarity">
    <text evidence="6">Belongs to the Petuviruses genome polyprotein family.</text>
</comment>
<name>POLG_PVCV2</name>
<evidence type="ECO:0000250" key="1"/>
<evidence type="ECO:0000255" key="2"/>
<evidence type="ECO:0000255" key="3">
    <source>
        <dbReference type="PROSITE-ProRule" id="PRU00047"/>
    </source>
</evidence>
<evidence type="ECO:0000255" key="4">
    <source>
        <dbReference type="PROSITE-ProRule" id="PRU00405"/>
    </source>
</evidence>
<evidence type="ECO:0000256" key="5">
    <source>
        <dbReference type="SAM" id="MobiDB-lite"/>
    </source>
</evidence>
<evidence type="ECO:0000305" key="6"/>
<proteinExistence type="inferred from homology"/>
<organism>
    <name type="scientific">Petunia vein clearing virus (isolate Hohn)</name>
    <name type="common">PVCV</name>
    <dbReference type="NCBI Taxonomy" id="492095"/>
    <lineage>
        <taxon>Viruses</taxon>
        <taxon>Riboviria</taxon>
        <taxon>Pararnavirae</taxon>
        <taxon>Artverviricota</taxon>
        <taxon>Revtraviricetes</taxon>
        <taxon>Ortervirales</taxon>
        <taxon>Caulimoviridae</taxon>
        <taxon>Petuvirus</taxon>
        <taxon>Petuvirus venapetuniae</taxon>
    </lineage>
</organism>